<accession>Q8TW15</accession>
<sequence length="130" mass="14787">MTLMDPLADAMATIKNNEMVGNKECVIEPASKLIGRVLKVMQEYGYIGSFEFIDDGRSGKFLVKLVGRINDCGVIKPRHPVKKDEWEYWEQRYLPARDFGLLIVTTPEGVMSHYEAKERGIGGRLLAYVY</sequence>
<reference key="1">
    <citation type="journal article" date="2002" name="Proc. Natl. Acad. Sci. U.S.A.">
        <title>The complete genome of hyperthermophile Methanopyrus kandleri AV19 and monophyly of archaeal methanogens.</title>
        <authorList>
            <person name="Slesarev A.I."/>
            <person name="Mezhevaya K.V."/>
            <person name="Makarova K.S."/>
            <person name="Polushin N.N."/>
            <person name="Shcherbinina O.V."/>
            <person name="Shakhova V.V."/>
            <person name="Belova G.I."/>
            <person name="Aravind L."/>
            <person name="Natale D.A."/>
            <person name="Rogozin I.B."/>
            <person name="Tatusov R.L."/>
            <person name="Wolf Y.I."/>
            <person name="Stetter K.O."/>
            <person name="Malykh A.G."/>
            <person name="Koonin E.V."/>
            <person name="Kozyavkin S.A."/>
        </authorList>
    </citation>
    <scope>NUCLEOTIDE SEQUENCE [LARGE SCALE GENOMIC DNA]</scope>
    <source>
        <strain>AV19 / DSM 6324 / JCM 9639 / NBRC 100938</strain>
    </source>
</reference>
<proteinExistence type="inferred from homology"/>
<feature type="chain" id="PRO_0000126541" description="Small ribosomal subunit protein uS8">
    <location>
        <begin position="1"/>
        <end position="130"/>
    </location>
</feature>
<dbReference type="EMBL" id="AE009439">
    <property type="protein sequence ID" value="AAM02436.1"/>
    <property type="molecule type" value="Genomic_DNA"/>
</dbReference>
<dbReference type="RefSeq" id="WP_011019591.1">
    <property type="nucleotide sequence ID" value="NC_003551.1"/>
</dbReference>
<dbReference type="SMR" id="Q8TW15"/>
<dbReference type="FunCoup" id="Q8TW15">
    <property type="interactions" value="158"/>
</dbReference>
<dbReference type="STRING" id="190192.MK1223"/>
<dbReference type="PaxDb" id="190192-MK1223"/>
<dbReference type="EnsemblBacteria" id="AAM02436">
    <property type="protein sequence ID" value="AAM02436"/>
    <property type="gene ID" value="MK1223"/>
</dbReference>
<dbReference type="GeneID" id="1477818"/>
<dbReference type="KEGG" id="mka:MK1223"/>
<dbReference type="PATRIC" id="fig|190192.8.peg.1326"/>
<dbReference type="HOGENOM" id="CLU_098428_1_1_2"/>
<dbReference type="InParanoid" id="Q8TW15"/>
<dbReference type="OrthoDB" id="5670at2157"/>
<dbReference type="Proteomes" id="UP000001826">
    <property type="component" value="Chromosome"/>
</dbReference>
<dbReference type="GO" id="GO:1990904">
    <property type="term" value="C:ribonucleoprotein complex"/>
    <property type="evidence" value="ECO:0007669"/>
    <property type="project" value="UniProtKB-KW"/>
</dbReference>
<dbReference type="GO" id="GO:0005840">
    <property type="term" value="C:ribosome"/>
    <property type="evidence" value="ECO:0007669"/>
    <property type="project" value="UniProtKB-KW"/>
</dbReference>
<dbReference type="GO" id="GO:0019843">
    <property type="term" value="F:rRNA binding"/>
    <property type="evidence" value="ECO:0007669"/>
    <property type="project" value="UniProtKB-UniRule"/>
</dbReference>
<dbReference type="GO" id="GO:0003735">
    <property type="term" value="F:structural constituent of ribosome"/>
    <property type="evidence" value="ECO:0007669"/>
    <property type="project" value="InterPro"/>
</dbReference>
<dbReference type="GO" id="GO:0006412">
    <property type="term" value="P:translation"/>
    <property type="evidence" value="ECO:0007669"/>
    <property type="project" value="UniProtKB-UniRule"/>
</dbReference>
<dbReference type="FunFam" id="3.30.1370.30:FF:000001">
    <property type="entry name" value="40S ribosomal protein S15a"/>
    <property type="match status" value="1"/>
</dbReference>
<dbReference type="FunFam" id="3.30.1490.10:FF:000002">
    <property type="entry name" value="40S ribosomal protein S15a"/>
    <property type="match status" value="1"/>
</dbReference>
<dbReference type="Gene3D" id="3.30.1370.30">
    <property type="match status" value="1"/>
</dbReference>
<dbReference type="Gene3D" id="3.30.1490.10">
    <property type="match status" value="1"/>
</dbReference>
<dbReference type="HAMAP" id="MF_01302_A">
    <property type="entry name" value="Ribosomal_uS8_A"/>
    <property type="match status" value="1"/>
</dbReference>
<dbReference type="InterPro" id="IPR000630">
    <property type="entry name" value="Ribosomal_uS8"/>
</dbReference>
<dbReference type="InterPro" id="IPR047863">
    <property type="entry name" value="Ribosomal_uS8_CS"/>
</dbReference>
<dbReference type="InterPro" id="IPR035987">
    <property type="entry name" value="Ribosomal_uS8_sf"/>
</dbReference>
<dbReference type="NCBIfam" id="NF003115">
    <property type="entry name" value="PRK04034.1"/>
    <property type="match status" value="1"/>
</dbReference>
<dbReference type="PANTHER" id="PTHR11758">
    <property type="entry name" value="40S RIBOSOMAL PROTEIN S15A"/>
    <property type="match status" value="1"/>
</dbReference>
<dbReference type="Pfam" id="PF00410">
    <property type="entry name" value="Ribosomal_S8"/>
    <property type="match status" value="1"/>
</dbReference>
<dbReference type="SUPFAM" id="SSF56047">
    <property type="entry name" value="Ribosomal protein S8"/>
    <property type="match status" value="1"/>
</dbReference>
<dbReference type="PROSITE" id="PS00053">
    <property type="entry name" value="RIBOSOMAL_S8"/>
    <property type="match status" value="1"/>
</dbReference>
<organism>
    <name type="scientific">Methanopyrus kandleri (strain AV19 / DSM 6324 / JCM 9639 / NBRC 100938)</name>
    <dbReference type="NCBI Taxonomy" id="190192"/>
    <lineage>
        <taxon>Archaea</taxon>
        <taxon>Methanobacteriati</taxon>
        <taxon>Methanobacteriota</taxon>
        <taxon>Methanomada group</taxon>
        <taxon>Methanopyri</taxon>
        <taxon>Methanopyrales</taxon>
        <taxon>Methanopyraceae</taxon>
        <taxon>Methanopyrus</taxon>
    </lineage>
</organism>
<evidence type="ECO:0000255" key="1">
    <source>
        <dbReference type="HAMAP-Rule" id="MF_01302"/>
    </source>
</evidence>
<evidence type="ECO:0000305" key="2"/>
<gene>
    <name evidence="1" type="primary">rps8</name>
    <name type="ordered locus">MK1223</name>
</gene>
<name>RS8_METKA</name>
<comment type="function">
    <text evidence="1">One of the primary rRNA binding proteins, it binds directly to 16S rRNA central domain where it helps coordinate assembly of the platform of the 30S subunit.</text>
</comment>
<comment type="subunit">
    <text evidence="1">Part of the 30S ribosomal subunit.</text>
</comment>
<comment type="similarity">
    <text evidence="1">Belongs to the universal ribosomal protein uS8 family.</text>
</comment>
<keyword id="KW-1185">Reference proteome</keyword>
<keyword id="KW-0687">Ribonucleoprotein</keyword>
<keyword id="KW-0689">Ribosomal protein</keyword>
<keyword id="KW-0694">RNA-binding</keyword>
<keyword id="KW-0699">rRNA-binding</keyword>
<protein>
    <recommendedName>
        <fullName evidence="1">Small ribosomal subunit protein uS8</fullName>
    </recommendedName>
    <alternativeName>
        <fullName evidence="2">30S ribosomal protein S8</fullName>
    </alternativeName>
</protein>